<proteinExistence type="inferred from homology"/>
<feature type="chain" id="PRO_1000194211" description="Small ribosomal subunit protein uS12">
    <location>
        <begin position="1"/>
        <end position="123"/>
    </location>
</feature>
<feature type="region of interest" description="Disordered" evidence="3">
    <location>
        <begin position="100"/>
        <end position="123"/>
    </location>
</feature>
<feature type="compositionally biased region" description="Basic residues" evidence="3">
    <location>
        <begin position="113"/>
        <end position="123"/>
    </location>
</feature>
<feature type="modified residue" description="3-methylthioaspartic acid" evidence="1">
    <location>
        <position position="89"/>
    </location>
</feature>
<evidence type="ECO:0000250" key="1"/>
<evidence type="ECO:0000255" key="2">
    <source>
        <dbReference type="HAMAP-Rule" id="MF_00403"/>
    </source>
</evidence>
<evidence type="ECO:0000256" key="3">
    <source>
        <dbReference type="SAM" id="MobiDB-lite"/>
    </source>
</evidence>
<evidence type="ECO:0000305" key="4"/>
<sequence>MATINQLVRKPRKRMVDKSDVPALQNCPQRRGVCTRVYTTTPKKPNSALRKVCRVRLTNGFEVSSYIGGEGHNLQEHSVVLIRGGRVKDLPGVRYHTVRGSLDTSGVKDRKQGRSKYGAKRPK</sequence>
<gene>
    <name evidence="2" type="primary">rpsL</name>
    <name type="ordered locus">PLES_06601</name>
</gene>
<name>RS12_PSEA8</name>
<comment type="function">
    <text evidence="2">With S4 and S5 plays an important role in translational accuracy.</text>
</comment>
<comment type="function">
    <text evidence="2">Interacts with and stabilizes bases of the 16S rRNA that are involved in tRNA selection in the A site and with the mRNA backbone. Located at the interface of the 30S and 50S subunits, it traverses the body of the 30S subunit contacting proteins on the other side and probably holding the rRNA structure together. The combined cluster of proteins S8, S12 and S17 appears to hold together the shoulder and platform of the 30S subunit.</text>
</comment>
<comment type="subunit">
    <text evidence="2">Part of the 30S ribosomal subunit. Contacts proteins S8 and S17. May interact with IF1 in the 30S initiation complex.</text>
</comment>
<comment type="similarity">
    <text evidence="2">Belongs to the universal ribosomal protein uS12 family.</text>
</comment>
<keyword id="KW-0488">Methylation</keyword>
<keyword id="KW-0687">Ribonucleoprotein</keyword>
<keyword id="KW-0689">Ribosomal protein</keyword>
<keyword id="KW-0694">RNA-binding</keyword>
<keyword id="KW-0699">rRNA-binding</keyword>
<keyword id="KW-0820">tRNA-binding</keyword>
<protein>
    <recommendedName>
        <fullName evidence="2">Small ribosomal subunit protein uS12</fullName>
    </recommendedName>
    <alternativeName>
        <fullName evidence="4">30S ribosomal protein S12</fullName>
    </alternativeName>
</protein>
<dbReference type="EMBL" id="FM209186">
    <property type="protein sequence ID" value="CAW25387.1"/>
    <property type="molecule type" value="Genomic_DNA"/>
</dbReference>
<dbReference type="RefSeq" id="WP_003093744.1">
    <property type="nucleotide sequence ID" value="NC_011770.1"/>
</dbReference>
<dbReference type="SMR" id="B7V639"/>
<dbReference type="GeneID" id="77219193"/>
<dbReference type="KEGG" id="pag:PLES_06601"/>
<dbReference type="HOGENOM" id="CLU_104295_1_2_6"/>
<dbReference type="GO" id="GO:0015935">
    <property type="term" value="C:small ribosomal subunit"/>
    <property type="evidence" value="ECO:0007669"/>
    <property type="project" value="InterPro"/>
</dbReference>
<dbReference type="GO" id="GO:0019843">
    <property type="term" value="F:rRNA binding"/>
    <property type="evidence" value="ECO:0007669"/>
    <property type="project" value="UniProtKB-UniRule"/>
</dbReference>
<dbReference type="GO" id="GO:0003735">
    <property type="term" value="F:structural constituent of ribosome"/>
    <property type="evidence" value="ECO:0007669"/>
    <property type="project" value="InterPro"/>
</dbReference>
<dbReference type="GO" id="GO:0000049">
    <property type="term" value="F:tRNA binding"/>
    <property type="evidence" value="ECO:0007669"/>
    <property type="project" value="UniProtKB-UniRule"/>
</dbReference>
<dbReference type="GO" id="GO:0006412">
    <property type="term" value="P:translation"/>
    <property type="evidence" value="ECO:0007669"/>
    <property type="project" value="UniProtKB-UniRule"/>
</dbReference>
<dbReference type="CDD" id="cd03368">
    <property type="entry name" value="Ribosomal_S12"/>
    <property type="match status" value="1"/>
</dbReference>
<dbReference type="FunFam" id="2.40.50.140:FF:000001">
    <property type="entry name" value="30S ribosomal protein S12"/>
    <property type="match status" value="1"/>
</dbReference>
<dbReference type="Gene3D" id="2.40.50.140">
    <property type="entry name" value="Nucleic acid-binding proteins"/>
    <property type="match status" value="1"/>
</dbReference>
<dbReference type="HAMAP" id="MF_00403_B">
    <property type="entry name" value="Ribosomal_uS12_B"/>
    <property type="match status" value="1"/>
</dbReference>
<dbReference type="InterPro" id="IPR012340">
    <property type="entry name" value="NA-bd_OB-fold"/>
</dbReference>
<dbReference type="InterPro" id="IPR006032">
    <property type="entry name" value="Ribosomal_uS12"/>
</dbReference>
<dbReference type="InterPro" id="IPR005679">
    <property type="entry name" value="Ribosomal_uS12_bac"/>
</dbReference>
<dbReference type="NCBIfam" id="TIGR00981">
    <property type="entry name" value="rpsL_bact"/>
    <property type="match status" value="1"/>
</dbReference>
<dbReference type="PANTHER" id="PTHR11652">
    <property type="entry name" value="30S RIBOSOMAL PROTEIN S12 FAMILY MEMBER"/>
    <property type="match status" value="1"/>
</dbReference>
<dbReference type="Pfam" id="PF00164">
    <property type="entry name" value="Ribosom_S12_S23"/>
    <property type="match status" value="1"/>
</dbReference>
<dbReference type="PIRSF" id="PIRSF002133">
    <property type="entry name" value="Ribosomal_S12/S23"/>
    <property type="match status" value="1"/>
</dbReference>
<dbReference type="PRINTS" id="PR01034">
    <property type="entry name" value="RIBOSOMALS12"/>
</dbReference>
<dbReference type="SUPFAM" id="SSF50249">
    <property type="entry name" value="Nucleic acid-binding proteins"/>
    <property type="match status" value="1"/>
</dbReference>
<dbReference type="PROSITE" id="PS00055">
    <property type="entry name" value="RIBOSOMAL_S12"/>
    <property type="match status" value="1"/>
</dbReference>
<accession>B7V639</accession>
<reference key="1">
    <citation type="journal article" date="2009" name="Genome Res.">
        <title>Newly introduced genomic prophage islands are critical determinants of in vivo competitiveness in the Liverpool epidemic strain of Pseudomonas aeruginosa.</title>
        <authorList>
            <person name="Winstanley C."/>
            <person name="Langille M.G.I."/>
            <person name="Fothergill J.L."/>
            <person name="Kukavica-Ibrulj I."/>
            <person name="Paradis-Bleau C."/>
            <person name="Sanschagrin F."/>
            <person name="Thomson N.R."/>
            <person name="Winsor G.L."/>
            <person name="Quail M.A."/>
            <person name="Lennard N."/>
            <person name="Bignell A."/>
            <person name="Clarke L."/>
            <person name="Seeger K."/>
            <person name="Saunders D."/>
            <person name="Harris D."/>
            <person name="Parkhill J."/>
            <person name="Hancock R.E.W."/>
            <person name="Brinkman F.S.L."/>
            <person name="Levesque R.C."/>
        </authorList>
    </citation>
    <scope>NUCLEOTIDE SEQUENCE [LARGE SCALE GENOMIC DNA]</scope>
    <source>
        <strain>LESB58</strain>
    </source>
</reference>
<organism>
    <name type="scientific">Pseudomonas aeruginosa (strain LESB58)</name>
    <dbReference type="NCBI Taxonomy" id="557722"/>
    <lineage>
        <taxon>Bacteria</taxon>
        <taxon>Pseudomonadati</taxon>
        <taxon>Pseudomonadota</taxon>
        <taxon>Gammaproteobacteria</taxon>
        <taxon>Pseudomonadales</taxon>
        <taxon>Pseudomonadaceae</taxon>
        <taxon>Pseudomonas</taxon>
    </lineage>
</organism>